<accession>Q64ZA1</accession>
<proteinExistence type="inferred from homology"/>
<keyword id="KW-0119">Carbohydrate metabolism</keyword>
<keyword id="KW-0456">Lyase</keyword>
<comment type="function">
    <text evidence="1">Specifically catalyzes the cleavage of the D-lactyl ether substituent of MurNAc 6-phosphate, producing GlcNAc 6-phosphate and D-lactate.</text>
</comment>
<comment type="catalytic activity">
    <reaction evidence="1">
        <text>N-acetyl-D-muramate 6-phosphate + H2O = N-acetyl-D-glucosamine 6-phosphate + (R)-lactate</text>
        <dbReference type="Rhea" id="RHEA:26410"/>
        <dbReference type="ChEBI" id="CHEBI:15377"/>
        <dbReference type="ChEBI" id="CHEBI:16004"/>
        <dbReference type="ChEBI" id="CHEBI:57513"/>
        <dbReference type="ChEBI" id="CHEBI:58722"/>
        <dbReference type="EC" id="4.2.1.126"/>
    </reaction>
</comment>
<comment type="pathway">
    <text evidence="1">Amino-sugar metabolism; N-acetylmuramate degradation.</text>
</comment>
<comment type="subunit">
    <text evidence="1">Homodimer.</text>
</comment>
<comment type="miscellaneous">
    <text evidence="1">A lyase-type mechanism (elimination/hydration) is suggested for the cleavage of the lactyl ether bond of MurNAc 6-phosphate, with the formation of an alpha,beta-unsaturated aldehyde intermediate with (E)-stereochemistry, followed by the syn addition of water to give product.</text>
</comment>
<comment type="similarity">
    <text evidence="1">Belongs to the GCKR-like family. MurNAc-6-P etherase subfamily.</text>
</comment>
<protein>
    <recommendedName>
        <fullName evidence="1">N-acetylmuramic acid 6-phosphate etherase</fullName>
        <shortName evidence="1">MurNAc-6-P etherase</shortName>
        <ecNumber evidence="1">4.2.1.126</ecNumber>
    </recommendedName>
    <alternativeName>
        <fullName evidence="1">N-acetylmuramic acid 6-phosphate hydrolase</fullName>
    </alternativeName>
    <alternativeName>
        <fullName evidence="1">N-acetylmuramic acid 6-phosphate lyase</fullName>
    </alternativeName>
</protein>
<sequence>MNSNIEKSDKPSFIKISEQPSLYDDLEKKSVREILEDINKEDQKVAIAVQKAIPQIEKLVTQIVPRMKQGGRIFYMGAGTSGRLGVLDASEIPPTFGMPPTLIIGLIAGGDTALRNPVENAEDNTIRGWEELTEHNINDKDTVIGIAASGTTPYVIGAMHAAREHGILTGCITSNPNSPMAAEADIPIEMIVGPEYVTGSSRMKSGTGQKMILNMITTSVMIQLGRVKGNKMVNMQLSNRKLVDRGTRMIIEELGLEYDKAKALLLMHGSVKKAIDAYKAG</sequence>
<gene>
    <name evidence="1" type="primary">murQ</name>
    <name type="ordered locus">BF0426</name>
</gene>
<reference key="1">
    <citation type="journal article" date="2004" name="Proc. Natl. Acad. Sci. U.S.A.">
        <title>Genomic analysis of Bacteroides fragilis reveals extensive DNA inversions regulating cell surface adaptation.</title>
        <authorList>
            <person name="Kuwahara T."/>
            <person name="Yamashita A."/>
            <person name="Hirakawa H."/>
            <person name="Nakayama H."/>
            <person name="Toh H."/>
            <person name="Okada N."/>
            <person name="Kuhara S."/>
            <person name="Hattori M."/>
            <person name="Hayashi T."/>
            <person name="Ohnishi Y."/>
        </authorList>
    </citation>
    <scope>NUCLEOTIDE SEQUENCE [LARGE SCALE GENOMIC DNA]</scope>
    <source>
        <strain>YCH46</strain>
    </source>
</reference>
<feature type="chain" id="PRO_0000249612" description="N-acetylmuramic acid 6-phosphate etherase">
    <location>
        <begin position="1"/>
        <end position="281"/>
    </location>
</feature>
<feature type="domain" description="SIS" evidence="1">
    <location>
        <begin position="63"/>
        <end position="226"/>
    </location>
</feature>
<feature type="active site" description="Proton donor" evidence="1">
    <location>
        <position position="91"/>
    </location>
</feature>
<feature type="active site" evidence="1">
    <location>
        <position position="122"/>
    </location>
</feature>
<dbReference type="EC" id="4.2.1.126" evidence="1"/>
<dbReference type="EMBL" id="AP006841">
    <property type="protein sequence ID" value="BAD47175.1"/>
    <property type="molecule type" value="Genomic_DNA"/>
</dbReference>
<dbReference type="RefSeq" id="WP_005801650.1">
    <property type="nucleotide sequence ID" value="NZ_UYXF01000016.1"/>
</dbReference>
<dbReference type="RefSeq" id="YP_097709.1">
    <property type="nucleotide sequence ID" value="NC_006347.1"/>
</dbReference>
<dbReference type="SMR" id="Q64ZA1"/>
<dbReference type="STRING" id="295405.BF0426"/>
<dbReference type="KEGG" id="bfr:BF0426"/>
<dbReference type="PATRIC" id="fig|295405.11.peg.445"/>
<dbReference type="HOGENOM" id="CLU_049049_1_1_10"/>
<dbReference type="OrthoDB" id="9813395at2"/>
<dbReference type="UniPathway" id="UPA00342"/>
<dbReference type="Proteomes" id="UP000002197">
    <property type="component" value="Chromosome"/>
</dbReference>
<dbReference type="GO" id="GO:0097367">
    <property type="term" value="F:carbohydrate derivative binding"/>
    <property type="evidence" value="ECO:0007669"/>
    <property type="project" value="InterPro"/>
</dbReference>
<dbReference type="GO" id="GO:0016835">
    <property type="term" value="F:carbon-oxygen lyase activity"/>
    <property type="evidence" value="ECO:0007669"/>
    <property type="project" value="UniProtKB-UniRule"/>
</dbReference>
<dbReference type="GO" id="GO:0016803">
    <property type="term" value="F:ether hydrolase activity"/>
    <property type="evidence" value="ECO:0007669"/>
    <property type="project" value="TreeGrafter"/>
</dbReference>
<dbReference type="GO" id="GO:0046348">
    <property type="term" value="P:amino sugar catabolic process"/>
    <property type="evidence" value="ECO:0007669"/>
    <property type="project" value="InterPro"/>
</dbReference>
<dbReference type="GO" id="GO:0097173">
    <property type="term" value="P:N-acetylmuramic acid catabolic process"/>
    <property type="evidence" value="ECO:0007669"/>
    <property type="project" value="UniProtKB-UniPathway"/>
</dbReference>
<dbReference type="GO" id="GO:0009254">
    <property type="term" value="P:peptidoglycan turnover"/>
    <property type="evidence" value="ECO:0007669"/>
    <property type="project" value="TreeGrafter"/>
</dbReference>
<dbReference type="CDD" id="cd05007">
    <property type="entry name" value="SIS_Etherase"/>
    <property type="match status" value="1"/>
</dbReference>
<dbReference type="FunFam" id="3.40.50.10490:FF:000014">
    <property type="entry name" value="N-acetylmuramic acid 6-phosphate etherase"/>
    <property type="match status" value="1"/>
</dbReference>
<dbReference type="Gene3D" id="3.40.50.10490">
    <property type="entry name" value="Glucose-6-phosphate isomerase like protein, domain 1"/>
    <property type="match status" value="1"/>
</dbReference>
<dbReference type="HAMAP" id="MF_00068">
    <property type="entry name" value="MurQ"/>
    <property type="match status" value="1"/>
</dbReference>
<dbReference type="InterPro" id="IPR005488">
    <property type="entry name" value="Etherase_MurQ"/>
</dbReference>
<dbReference type="InterPro" id="IPR005486">
    <property type="entry name" value="Glucokinase_regulatory_CS"/>
</dbReference>
<dbReference type="InterPro" id="IPR040190">
    <property type="entry name" value="MURQ/GCKR"/>
</dbReference>
<dbReference type="InterPro" id="IPR001347">
    <property type="entry name" value="SIS_dom"/>
</dbReference>
<dbReference type="InterPro" id="IPR046348">
    <property type="entry name" value="SIS_dom_sf"/>
</dbReference>
<dbReference type="NCBIfam" id="TIGR00274">
    <property type="entry name" value="N-acetylmuramic acid 6-phosphate etherase"/>
    <property type="match status" value="1"/>
</dbReference>
<dbReference type="NCBIfam" id="NF003915">
    <property type="entry name" value="PRK05441.1"/>
    <property type="match status" value="1"/>
</dbReference>
<dbReference type="NCBIfam" id="NF009222">
    <property type="entry name" value="PRK12570.1"/>
    <property type="match status" value="1"/>
</dbReference>
<dbReference type="PANTHER" id="PTHR10088">
    <property type="entry name" value="GLUCOKINASE REGULATORY PROTEIN"/>
    <property type="match status" value="1"/>
</dbReference>
<dbReference type="PANTHER" id="PTHR10088:SF4">
    <property type="entry name" value="GLUCOKINASE REGULATORY PROTEIN"/>
    <property type="match status" value="1"/>
</dbReference>
<dbReference type="Pfam" id="PF22645">
    <property type="entry name" value="GKRP_SIS_N"/>
    <property type="match status" value="1"/>
</dbReference>
<dbReference type="SUPFAM" id="SSF53697">
    <property type="entry name" value="SIS domain"/>
    <property type="match status" value="1"/>
</dbReference>
<dbReference type="PROSITE" id="PS01272">
    <property type="entry name" value="GCKR"/>
    <property type="match status" value="1"/>
</dbReference>
<dbReference type="PROSITE" id="PS51464">
    <property type="entry name" value="SIS"/>
    <property type="match status" value="1"/>
</dbReference>
<name>MURQ_BACFR</name>
<organism>
    <name type="scientific">Bacteroides fragilis (strain YCH46)</name>
    <dbReference type="NCBI Taxonomy" id="295405"/>
    <lineage>
        <taxon>Bacteria</taxon>
        <taxon>Pseudomonadati</taxon>
        <taxon>Bacteroidota</taxon>
        <taxon>Bacteroidia</taxon>
        <taxon>Bacteroidales</taxon>
        <taxon>Bacteroidaceae</taxon>
        <taxon>Bacteroides</taxon>
    </lineage>
</organism>
<evidence type="ECO:0000255" key="1">
    <source>
        <dbReference type="HAMAP-Rule" id="MF_00068"/>
    </source>
</evidence>